<proteinExistence type="inferred from homology"/>
<protein>
    <recommendedName>
        <fullName evidence="1">Ecotin</fullName>
    </recommendedName>
</protein>
<name>ECOT_SHIF8</name>
<gene>
    <name evidence="1" type="primary">eco</name>
    <name type="ordered locus">SFV_2284</name>
</gene>
<reference key="1">
    <citation type="journal article" date="2006" name="BMC Genomics">
        <title>Complete genome sequence of Shigella flexneri 5b and comparison with Shigella flexneri 2a.</title>
        <authorList>
            <person name="Nie H."/>
            <person name="Yang F."/>
            <person name="Zhang X."/>
            <person name="Yang J."/>
            <person name="Chen L."/>
            <person name="Wang J."/>
            <person name="Xiong Z."/>
            <person name="Peng J."/>
            <person name="Sun L."/>
            <person name="Dong J."/>
            <person name="Xue Y."/>
            <person name="Xu X."/>
            <person name="Chen S."/>
            <person name="Yao Z."/>
            <person name="Shen Y."/>
            <person name="Jin Q."/>
        </authorList>
    </citation>
    <scope>NUCLEOTIDE SEQUENCE [LARGE SCALE GENOMIC DNA]</scope>
    <source>
        <strain>8401</strain>
    </source>
</reference>
<feature type="signal peptide" evidence="1">
    <location>
        <begin position="1"/>
        <end position="20"/>
    </location>
</feature>
<feature type="chain" id="PRO_1000045519" description="Ecotin">
    <location>
        <begin position="21"/>
        <end position="162"/>
    </location>
</feature>
<feature type="site" description="Reactive bond" evidence="1">
    <location>
        <begin position="104"/>
        <end position="105"/>
    </location>
</feature>
<feature type="disulfide bond" evidence="1">
    <location>
        <begin position="70"/>
        <end position="107"/>
    </location>
</feature>
<sequence length="162" mass="18226">MKTILPEVLFAAFATTSAWAAESVQPLEKIAPYPQAETGMKRQVIQLTPQEDESTLKVELLIGQTLEVDCNLHRLGGKLESKTLEGWGYDYYVFDKVSSPVSTMMACPDGKKEKKFVTAYLGDAGMLRYNSKLPIVVYTPDNVDVKYRVWKAEEKIDNAEVR</sequence>
<organism>
    <name type="scientific">Shigella flexneri serotype 5b (strain 8401)</name>
    <dbReference type="NCBI Taxonomy" id="373384"/>
    <lineage>
        <taxon>Bacteria</taxon>
        <taxon>Pseudomonadati</taxon>
        <taxon>Pseudomonadota</taxon>
        <taxon>Gammaproteobacteria</taxon>
        <taxon>Enterobacterales</taxon>
        <taxon>Enterobacteriaceae</taxon>
        <taxon>Shigella</taxon>
    </lineage>
</organism>
<accession>Q0T2R6</accession>
<comment type="function">
    <text evidence="1">General inhibitor of pancreatic serine proteases: inhibits chymotrypsin, trypsin, elastases, factor X, kallikrein as well as a variety of other proteases.</text>
</comment>
<comment type="subunit">
    <text evidence="1">Homodimer.</text>
</comment>
<comment type="subcellular location">
    <subcellularLocation>
        <location evidence="1">Periplasm</location>
    </subcellularLocation>
</comment>
<comment type="similarity">
    <text evidence="1">Belongs to the protease inhibitor I11 (ecotin) family.</text>
</comment>
<evidence type="ECO:0000255" key="1">
    <source>
        <dbReference type="HAMAP-Rule" id="MF_00706"/>
    </source>
</evidence>
<dbReference type="EMBL" id="CP000266">
    <property type="protein sequence ID" value="ABF04399.1"/>
    <property type="molecule type" value="Genomic_DNA"/>
</dbReference>
<dbReference type="SMR" id="Q0T2R6"/>
<dbReference type="MEROPS" id="I11.001"/>
<dbReference type="KEGG" id="sfv:SFV_2284"/>
<dbReference type="HOGENOM" id="CLU_111565_0_0_6"/>
<dbReference type="Proteomes" id="UP000000659">
    <property type="component" value="Chromosome"/>
</dbReference>
<dbReference type="GO" id="GO:0042597">
    <property type="term" value="C:periplasmic space"/>
    <property type="evidence" value="ECO:0007669"/>
    <property type="project" value="UniProtKB-SubCell"/>
</dbReference>
<dbReference type="GO" id="GO:0004867">
    <property type="term" value="F:serine-type endopeptidase inhibitor activity"/>
    <property type="evidence" value="ECO:0007669"/>
    <property type="project" value="UniProtKB-UniRule"/>
</dbReference>
<dbReference type="CDD" id="cd00242">
    <property type="entry name" value="Ecotin"/>
    <property type="match status" value="1"/>
</dbReference>
<dbReference type="FunFam" id="2.60.40.550:FF:000001">
    <property type="entry name" value="Ecotin"/>
    <property type="match status" value="1"/>
</dbReference>
<dbReference type="FunFam" id="4.10.1230.10:FF:000001">
    <property type="entry name" value="Ecotin"/>
    <property type="match status" value="1"/>
</dbReference>
<dbReference type="Gene3D" id="2.60.40.550">
    <property type="entry name" value="Ecotin"/>
    <property type="match status" value="1"/>
</dbReference>
<dbReference type="Gene3D" id="4.10.1230.10">
    <property type="entry name" value="Ecotin, trypsin inhibitor"/>
    <property type="match status" value="1"/>
</dbReference>
<dbReference type="HAMAP" id="MF_00706">
    <property type="entry name" value="Ecotin"/>
    <property type="match status" value="1"/>
</dbReference>
<dbReference type="InterPro" id="IPR027438">
    <property type="entry name" value="Ecotin_C"/>
</dbReference>
<dbReference type="InterPro" id="IPR036198">
    <property type="entry name" value="Ecotin_sf"/>
</dbReference>
<dbReference type="InterPro" id="IPR005658">
    <property type="entry name" value="Prot_inh_ecotin"/>
</dbReference>
<dbReference type="InterPro" id="IPR023084">
    <property type="entry name" value="Prot_inh_ecotin_gammaproteobac"/>
</dbReference>
<dbReference type="NCBIfam" id="NF002987">
    <property type="entry name" value="PRK03719.1"/>
    <property type="match status" value="1"/>
</dbReference>
<dbReference type="PANTHER" id="PTHR35890">
    <property type="match status" value="1"/>
</dbReference>
<dbReference type="PANTHER" id="PTHR35890:SF3">
    <property type="entry name" value="ECOTIN"/>
    <property type="match status" value="1"/>
</dbReference>
<dbReference type="Pfam" id="PF03974">
    <property type="entry name" value="Ecotin"/>
    <property type="match status" value="1"/>
</dbReference>
<dbReference type="PIRSF" id="PIRSF006865">
    <property type="entry name" value="Prot_inh_ecotin"/>
    <property type="match status" value="1"/>
</dbReference>
<dbReference type="SUPFAM" id="SSF49772">
    <property type="entry name" value="Ecotin, trypsin inhibitor"/>
    <property type="match status" value="1"/>
</dbReference>
<keyword id="KW-1015">Disulfide bond</keyword>
<keyword id="KW-0574">Periplasm</keyword>
<keyword id="KW-0646">Protease inhibitor</keyword>
<keyword id="KW-0722">Serine protease inhibitor</keyword>
<keyword id="KW-0732">Signal</keyword>